<feature type="chain" id="PRO_1000046765" description="UPF0304 protein YfbU">
    <location>
        <begin position="1"/>
        <end position="164"/>
    </location>
</feature>
<name>YFBU_SALPA</name>
<evidence type="ECO:0000255" key="1">
    <source>
        <dbReference type="HAMAP-Rule" id="MF_00762"/>
    </source>
</evidence>
<sequence>MEMTNAQRLILSNQYKMMTMLDPTNAERYRRLQTIIERGYGLQMRELDREFGELTEETCRTIIDIMEMYHALHVSWTNLKDTQAIDERRVTFLGFDAATEARYLGYVRFMVNIEGRYTHFDAGTHGFNAQTPMWEKYQRMLNVWHACPRQYHLSANEINQIINA</sequence>
<accession>Q5PN45</accession>
<protein>
    <recommendedName>
        <fullName evidence="1">UPF0304 protein YfbU</fullName>
    </recommendedName>
</protein>
<organism>
    <name type="scientific">Salmonella paratyphi A (strain ATCC 9150 / SARB42)</name>
    <dbReference type="NCBI Taxonomy" id="295319"/>
    <lineage>
        <taxon>Bacteria</taxon>
        <taxon>Pseudomonadati</taxon>
        <taxon>Pseudomonadota</taxon>
        <taxon>Gammaproteobacteria</taxon>
        <taxon>Enterobacterales</taxon>
        <taxon>Enterobacteriaceae</taxon>
        <taxon>Salmonella</taxon>
    </lineage>
</organism>
<reference key="1">
    <citation type="journal article" date="2004" name="Nat. Genet.">
        <title>Comparison of genome degradation in Paratyphi A and Typhi, human-restricted serovars of Salmonella enterica that cause typhoid.</title>
        <authorList>
            <person name="McClelland M."/>
            <person name="Sanderson K.E."/>
            <person name="Clifton S.W."/>
            <person name="Latreille P."/>
            <person name="Porwollik S."/>
            <person name="Sabo A."/>
            <person name="Meyer R."/>
            <person name="Bieri T."/>
            <person name="Ozersky P."/>
            <person name="McLellan M."/>
            <person name="Harkins C.R."/>
            <person name="Wang C."/>
            <person name="Nguyen C."/>
            <person name="Berghoff A."/>
            <person name="Elliott G."/>
            <person name="Kohlberg S."/>
            <person name="Strong C."/>
            <person name="Du F."/>
            <person name="Carter J."/>
            <person name="Kremizki C."/>
            <person name="Layman D."/>
            <person name="Leonard S."/>
            <person name="Sun H."/>
            <person name="Fulton L."/>
            <person name="Nash W."/>
            <person name="Miner T."/>
            <person name="Minx P."/>
            <person name="Delehaunty K."/>
            <person name="Fronick C."/>
            <person name="Magrini V."/>
            <person name="Nhan M."/>
            <person name="Warren W."/>
            <person name="Florea L."/>
            <person name="Spieth J."/>
            <person name="Wilson R.K."/>
        </authorList>
    </citation>
    <scope>NUCLEOTIDE SEQUENCE [LARGE SCALE GENOMIC DNA]</scope>
    <source>
        <strain>ATCC 9150 / SARB42</strain>
    </source>
</reference>
<comment type="similarity">
    <text evidence="1">Belongs to the UPF0304 family.</text>
</comment>
<dbReference type="EMBL" id="CP000026">
    <property type="protein sequence ID" value="AAV76531.1"/>
    <property type="molecule type" value="Genomic_DNA"/>
</dbReference>
<dbReference type="RefSeq" id="WP_000426135.1">
    <property type="nucleotide sequence ID" value="NC_006511.1"/>
</dbReference>
<dbReference type="SMR" id="Q5PN45"/>
<dbReference type="KEGG" id="spt:SPA0529"/>
<dbReference type="HOGENOM" id="CLU_101021_1_0_6"/>
<dbReference type="Proteomes" id="UP000008185">
    <property type="component" value="Chromosome"/>
</dbReference>
<dbReference type="FunFam" id="1.10.3190.10:FF:000001">
    <property type="entry name" value="UPF0304 protein YfbU"/>
    <property type="match status" value="1"/>
</dbReference>
<dbReference type="Gene3D" id="1.10.287.680">
    <property type="entry name" value="Helix hairpin bin"/>
    <property type="match status" value="1"/>
</dbReference>
<dbReference type="Gene3D" id="1.10.3190.10">
    <property type="entry name" value="yfbu gene product, domain 2"/>
    <property type="match status" value="1"/>
</dbReference>
<dbReference type="HAMAP" id="MF_00762">
    <property type="entry name" value="UPF0304"/>
    <property type="match status" value="1"/>
</dbReference>
<dbReference type="InterPro" id="IPR005587">
    <property type="entry name" value="UPF0304_YfbU"/>
</dbReference>
<dbReference type="InterPro" id="IPR023146">
    <property type="entry name" value="YfbU_alpha-helical_sf"/>
</dbReference>
<dbReference type="InterPro" id="IPR023145">
    <property type="entry name" value="YfbU_helix-hairpin_sf"/>
</dbReference>
<dbReference type="NCBIfam" id="NF003936">
    <property type="entry name" value="PRK05445.1"/>
    <property type="match status" value="1"/>
</dbReference>
<dbReference type="Pfam" id="PF03887">
    <property type="entry name" value="YfbU"/>
    <property type="match status" value="1"/>
</dbReference>
<dbReference type="PIRSF" id="PIRSF006272">
    <property type="entry name" value="UCP006272"/>
    <property type="match status" value="1"/>
</dbReference>
<dbReference type="SUPFAM" id="SSF116960">
    <property type="entry name" value="YfbU-like"/>
    <property type="match status" value="1"/>
</dbReference>
<gene>
    <name evidence="1" type="primary">yfbU</name>
    <name type="ordered locus">SPA0529</name>
</gene>
<proteinExistence type="inferred from homology"/>